<comment type="function">
    <text evidence="1">Involved in the biosynthesis of isopentenyl diphosphate (IPP) and dimethylallyl diphosphate (DMAPP), two major building blocks of isoprenoid compounds. Catalyzes the conversion of 4-diphosphocytidyl-2-C-methyl-D-erythritol 2-phosphate (CDP-ME2P) to 2-C-methyl-D-erythritol 2,4-cyclodiphosphate (ME-CPP) with a corresponding release of cytidine 5-monophosphate (CMP).</text>
</comment>
<comment type="catalytic activity">
    <reaction evidence="1">
        <text>4-CDP-2-C-methyl-D-erythritol 2-phosphate = 2-C-methyl-D-erythritol 2,4-cyclic diphosphate + CMP</text>
        <dbReference type="Rhea" id="RHEA:23864"/>
        <dbReference type="ChEBI" id="CHEBI:57919"/>
        <dbReference type="ChEBI" id="CHEBI:58483"/>
        <dbReference type="ChEBI" id="CHEBI:60377"/>
        <dbReference type="EC" id="4.6.1.12"/>
    </reaction>
</comment>
<comment type="cofactor">
    <cofactor evidence="1">
        <name>a divalent metal cation</name>
        <dbReference type="ChEBI" id="CHEBI:60240"/>
    </cofactor>
    <text evidence="1">Binds 1 divalent metal cation per subunit.</text>
</comment>
<comment type="pathway">
    <text evidence="1">Isoprenoid biosynthesis; isopentenyl diphosphate biosynthesis via DXP pathway; isopentenyl diphosphate from 1-deoxy-D-xylulose 5-phosphate: step 4/6.</text>
</comment>
<comment type="subunit">
    <text evidence="1">Homotrimer.</text>
</comment>
<comment type="similarity">
    <text evidence="1">Belongs to the IspF family.</text>
</comment>
<gene>
    <name evidence="1" type="primary">ispF</name>
    <name type="ordered locus">PBPRA3076</name>
</gene>
<organism>
    <name type="scientific">Photobacterium profundum (strain SS9)</name>
    <dbReference type="NCBI Taxonomy" id="298386"/>
    <lineage>
        <taxon>Bacteria</taxon>
        <taxon>Pseudomonadati</taxon>
        <taxon>Pseudomonadota</taxon>
        <taxon>Gammaproteobacteria</taxon>
        <taxon>Vibrionales</taxon>
        <taxon>Vibrionaceae</taxon>
        <taxon>Photobacterium</taxon>
    </lineage>
</organism>
<dbReference type="EC" id="4.6.1.12" evidence="1"/>
<dbReference type="EMBL" id="CR378673">
    <property type="protein sequence ID" value="CAG21392.1"/>
    <property type="molecule type" value="Genomic_DNA"/>
</dbReference>
<dbReference type="RefSeq" id="WP_006232582.1">
    <property type="nucleotide sequence ID" value="NC_006370.1"/>
</dbReference>
<dbReference type="SMR" id="Q6LMT4"/>
<dbReference type="STRING" id="298386.PBPRA3076"/>
<dbReference type="KEGG" id="ppr:PBPRA3076"/>
<dbReference type="eggNOG" id="COG0245">
    <property type="taxonomic scope" value="Bacteria"/>
</dbReference>
<dbReference type="HOGENOM" id="CLU_084630_2_0_6"/>
<dbReference type="UniPathway" id="UPA00056">
    <property type="reaction ID" value="UER00095"/>
</dbReference>
<dbReference type="Proteomes" id="UP000000593">
    <property type="component" value="Chromosome 1"/>
</dbReference>
<dbReference type="GO" id="GO:0008685">
    <property type="term" value="F:2-C-methyl-D-erythritol 2,4-cyclodiphosphate synthase activity"/>
    <property type="evidence" value="ECO:0007669"/>
    <property type="project" value="UniProtKB-UniRule"/>
</dbReference>
<dbReference type="GO" id="GO:0046872">
    <property type="term" value="F:metal ion binding"/>
    <property type="evidence" value="ECO:0007669"/>
    <property type="project" value="UniProtKB-KW"/>
</dbReference>
<dbReference type="GO" id="GO:0019288">
    <property type="term" value="P:isopentenyl diphosphate biosynthetic process, methylerythritol 4-phosphate pathway"/>
    <property type="evidence" value="ECO:0007669"/>
    <property type="project" value="UniProtKB-UniRule"/>
</dbReference>
<dbReference type="GO" id="GO:0016114">
    <property type="term" value="P:terpenoid biosynthetic process"/>
    <property type="evidence" value="ECO:0007669"/>
    <property type="project" value="InterPro"/>
</dbReference>
<dbReference type="CDD" id="cd00554">
    <property type="entry name" value="MECDP_synthase"/>
    <property type="match status" value="1"/>
</dbReference>
<dbReference type="FunFam" id="3.30.1330.50:FF:000001">
    <property type="entry name" value="2-C-methyl-D-erythritol 2,4-cyclodiphosphate synthase"/>
    <property type="match status" value="1"/>
</dbReference>
<dbReference type="Gene3D" id="3.30.1330.50">
    <property type="entry name" value="2-C-methyl-D-erythritol 2,4-cyclodiphosphate synthase"/>
    <property type="match status" value="1"/>
</dbReference>
<dbReference type="HAMAP" id="MF_00107">
    <property type="entry name" value="IspF"/>
    <property type="match status" value="1"/>
</dbReference>
<dbReference type="InterPro" id="IPR003526">
    <property type="entry name" value="MECDP_synthase"/>
</dbReference>
<dbReference type="InterPro" id="IPR020555">
    <property type="entry name" value="MECDP_synthase_CS"/>
</dbReference>
<dbReference type="InterPro" id="IPR036571">
    <property type="entry name" value="MECDP_synthase_sf"/>
</dbReference>
<dbReference type="NCBIfam" id="TIGR00151">
    <property type="entry name" value="ispF"/>
    <property type="match status" value="1"/>
</dbReference>
<dbReference type="PANTHER" id="PTHR43181">
    <property type="entry name" value="2-C-METHYL-D-ERYTHRITOL 2,4-CYCLODIPHOSPHATE SYNTHASE, CHLOROPLASTIC"/>
    <property type="match status" value="1"/>
</dbReference>
<dbReference type="PANTHER" id="PTHR43181:SF1">
    <property type="entry name" value="2-C-METHYL-D-ERYTHRITOL 2,4-CYCLODIPHOSPHATE SYNTHASE, CHLOROPLASTIC"/>
    <property type="match status" value="1"/>
</dbReference>
<dbReference type="Pfam" id="PF02542">
    <property type="entry name" value="YgbB"/>
    <property type="match status" value="1"/>
</dbReference>
<dbReference type="SUPFAM" id="SSF69765">
    <property type="entry name" value="IpsF-like"/>
    <property type="match status" value="1"/>
</dbReference>
<dbReference type="PROSITE" id="PS01350">
    <property type="entry name" value="ISPF"/>
    <property type="match status" value="1"/>
</dbReference>
<sequence length="157" mass="16664">MRIGHGFDVHKFGGEGPVIIGGVAIPYEQGLIAHSDGDVALHAVCDALLGAIGAGDIGRHFPDTDAEWKGADSRFLLRDVYSKVKDKGYRLGNLDVTIIAQAPKMAPYIDAMCQAIAEDLETDIGNVNVKATTSERLGFTGRKEGIACEAVVLINAQ</sequence>
<evidence type="ECO:0000255" key="1">
    <source>
        <dbReference type="HAMAP-Rule" id="MF_00107"/>
    </source>
</evidence>
<accession>Q6LMT4</accession>
<proteinExistence type="inferred from homology"/>
<name>ISPF_PHOPR</name>
<reference key="1">
    <citation type="journal article" date="2005" name="Science">
        <title>Life at depth: Photobacterium profundum genome sequence and expression analysis.</title>
        <authorList>
            <person name="Vezzi A."/>
            <person name="Campanaro S."/>
            <person name="D'Angelo M."/>
            <person name="Simonato F."/>
            <person name="Vitulo N."/>
            <person name="Lauro F.M."/>
            <person name="Cestaro A."/>
            <person name="Malacrida G."/>
            <person name="Simionati B."/>
            <person name="Cannata N."/>
            <person name="Romualdi C."/>
            <person name="Bartlett D.H."/>
            <person name="Valle G."/>
        </authorList>
    </citation>
    <scope>NUCLEOTIDE SEQUENCE [LARGE SCALE GENOMIC DNA]</scope>
    <source>
        <strain>ATCC BAA-1253 / SS9</strain>
    </source>
</reference>
<feature type="chain" id="PRO_0000189492" description="2-C-methyl-D-erythritol 2,4-cyclodiphosphate synthase">
    <location>
        <begin position="1"/>
        <end position="157"/>
    </location>
</feature>
<feature type="binding site" evidence="1">
    <location>
        <begin position="8"/>
        <end position="10"/>
    </location>
    <ligand>
        <name>4-CDP-2-C-methyl-D-erythritol 2-phosphate</name>
        <dbReference type="ChEBI" id="CHEBI:57919"/>
    </ligand>
</feature>
<feature type="binding site" evidence="1">
    <location>
        <position position="8"/>
    </location>
    <ligand>
        <name>a divalent metal cation</name>
        <dbReference type="ChEBI" id="CHEBI:60240"/>
    </ligand>
</feature>
<feature type="binding site" evidence="1">
    <location>
        <position position="10"/>
    </location>
    <ligand>
        <name>a divalent metal cation</name>
        <dbReference type="ChEBI" id="CHEBI:60240"/>
    </ligand>
</feature>
<feature type="binding site" evidence="1">
    <location>
        <begin position="34"/>
        <end position="35"/>
    </location>
    <ligand>
        <name>4-CDP-2-C-methyl-D-erythritol 2-phosphate</name>
        <dbReference type="ChEBI" id="CHEBI:57919"/>
    </ligand>
</feature>
<feature type="binding site" evidence="1">
    <location>
        <position position="42"/>
    </location>
    <ligand>
        <name>a divalent metal cation</name>
        <dbReference type="ChEBI" id="CHEBI:60240"/>
    </ligand>
</feature>
<feature type="binding site" evidence="1">
    <location>
        <begin position="56"/>
        <end position="58"/>
    </location>
    <ligand>
        <name>4-CDP-2-C-methyl-D-erythritol 2-phosphate</name>
        <dbReference type="ChEBI" id="CHEBI:57919"/>
    </ligand>
</feature>
<feature type="binding site" evidence="1">
    <location>
        <begin position="61"/>
        <end position="65"/>
    </location>
    <ligand>
        <name>4-CDP-2-C-methyl-D-erythritol 2-phosphate</name>
        <dbReference type="ChEBI" id="CHEBI:57919"/>
    </ligand>
</feature>
<feature type="binding site" evidence="1">
    <location>
        <begin position="100"/>
        <end position="106"/>
    </location>
    <ligand>
        <name>4-CDP-2-C-methyl-D-erythritol 2-phosphate</name>
        <dbReference type="ChEBI" id="CHEBI:57919"/>
    </ligand>
</feature>
<feature type="binding site" evidence="1">
    <location>
        <begin position="132"/>
        <end position="135"/>
    </location>
    <ligand>
        <name>4-CDP-2-C-methyl-D-erythritol 2-phosphate</name>
        <dbReference type="ChEBI" id="CHEBI:57919"/>
    </ligand>
</feature>
<feature type="binding site" evidence="1">
    <location>
        <position position="139"/>
    </location>
    <ligand>
        <name>4-CDP-2-C-methyl-D-erythritol 2-phosphate</name>
        <dbReference type="ChEBI" id="CHEBI:57919"/>
    </ligand>
</feature>
<feature type="binding site" evidence="1">
    <location>
        <position position="142"/>
    </location>
    <ligand>
        <name>4-CDP-2-C-methyl-D-erythritol 2-phosphate</name>
        <dbReference type="ChEBI" id="CHEBI:57919"/>
    </ligand>
</feature>
<feature type="site" description="Transition state stabilizer" evidence="1">
    <location>
        <position position="34"/>
    </location>
</feature>
<feature type="site" description="Transition state stabilizer" evidence="1">
    <location>
        <position position="133"/>
    </location>
</feature>
<protein>
    <recommendedName>
        <fullName evidence="1">2-C-methyl-D-erythritol 2,4-cyclodiphosphate synthase</fullName>
        <shortName evidence="1">MECDP-synthase</shortName>
        <shortName evidence="1">MECPP-synthase</shortName>
        <shortName evidence="1">MECPS</shortName>
        <ecNumber evidence="1">4.6.1.12</ecNumber>
    </recommendedName>
</protein>
<keyword id="KW-0414">Isoprene biosynthesis</keyword>
<keyword id="KW-0456">Lyase</keyword>
<keyword id="KW-0479">Metal-binding</keyword>
<keyword id="KW-1185">Reference proteome</keyword>